<sequence length="281" mass="31845">MKARKSQRKAGSKPNLIQSKLQVNNGSKSNKIVKCDKCEMSYSSTSIEDRAIHEKYHTLQLHGRKWSPNWGSIVYTERNHSRTVHLSRSTGTITPLNSSPLKKSSPSITHQEEKIVYVRPDKSNGEVRAMTEIMTLVNNELNAPHDENVIWNSTTEEKGKAFVYIRNDRAVGIIIIENLYGGNGKTSSRGRWMVYDSRRLVQNVYPDFKIGISRIWVCRTARKLGIATKLIDVARENIVYGEVIPRYQVAWSQPTDSGGKLASKYNGIMHKSGKLLLPVYI</sequence>
<comment type="function">
    <text evidence="3 6 8 9">Required for establishment of sister chromatid cohesion during S phase but not for its further maintenance during G2 or M phases or for loading the cohesin complex onto DNA. Interacts with the three known alternate replication factor C (RFC) complexes, suggesting that these complexes have essential but redundant activity in cohesion establishment. Acts by acetylating the cohesin complex component SMC3. In vitro, possesses acetyltransferase activity where it can acetylate itself and components of the cohesin complex (MCD1, IRR1 and PDS5), but is unable to acetylate histones.</text>
</comment>
<comment type="subunit">
    <text evidence="3 4 5 7">Binds specifically to CHL12, RFC1, RFC2, RFC3, RFC4, RFC5 and RAD24 when members of an RFC complex. Interacts with CHL1 and MPS3.</text>
</comment>
<comment type="interaction">
    <interactant intactId="EBI-22988">
        <id>P43605</id>
    </interactant>
    <interactant intactId="EBI-4600">
        <id>P22516</id>
        <label>CHL1</label>
    </interactant>
    <organismsDiffer>false</organismsDiffer>
    <experiments>2</experiments>
</comment>
<comment type="interaction">
    <interactant intactId="EBI-22988">
        <id>P43605</id>
    </interactant>
    <interactant intactId="EBI-4560">
        <id>P49956</id>
        <label>CTF18</label>
    </interactant>
    <organismsDiffer>false</organismsDiffer>
    <experiments>2</experiments>
</comment>
<comment type="interaction">
    <interactant intactId="EBI-22988">
        <id>P43605</id>
    </interactant>
    <interactant intactId="EBI-25811">
        <id>P47069</id>
        <label>MPS3</label>
    </interactant>
    <organismsDiffer>false</organismsDiffer>
    <experiments>5</experiments>
</comment>
<comment type="interaction">
    <interactant intactId="EBI-22988">
        <id>P43605</id>
    </interactant>
    <interactant intactId="EBI-12993">
        <id>P15873</id>
        <label>POL30</label>
    </interactant>
    <organismsDiffer>false</organismsDiffer>
    <experiments>2</experiments>
</comment>
<comment type="subcellular location">
    <subcellularLocation>
        <location evidence="8 9">Nucleus</location>
    </subcellularLocation>
    <text>Associated with chromatin.</text>
</comment>
<comment type="PTM">
    <text>Autoacetylates in vitro.</text>
</comment>
<comment type="similarity">
    <text evidence="10">Belongs to the acetyltransferase family. ECO subfamily.</text>
</comment>
<gene>
    <name type="primary">ECO1</name>
    <name type="synonym">CTF7</name>
    <name type="ordered locus">YFR027W</name>
</gene>
<name>ECO1_YEAST</name>
<proteinExistence type="evidence at protein level"/>
<accession>P43605</accession>
<accession>D6VTQ7</accession>
<reference key="1">
    <citation type="journal article" date="1999" name="Genes Dev.">
        <title>Ctf7p is essential for sister chromatid cohesion and links mitotic chromosome structure to the DNA replication machinery.</title>
        <authorList>
            <person name="Skibbens R.V."/>
            <person name="Corson L.B."/>
            <person name="Koshland D."/>
            <person name="Hieter P."/>
        </authorList>
    </citation>
    <scope>NUCLEOTIDE SEQUENCE [GENOMIC DNA]</scope>
    <scope>FUNCTION</scope>
    <scope>SUBCELLULAR LOCATION</scope>
</reference>
<reference key="2">
    <citation type="journal article" date="1999" name="Genes Dev.">
        <title>Yeast cohesin complex requires a conserved protein, Eco1p(Ctf7), to establish cohesion between sister chromatids during DNA replication.</title>
        <authorList>
            <person name="Toth A."/>
            <person name="Ciosk R."/>
            <person name="Uhlmann F."/>
            <person name="Galova M."/>
            <person name="Schleiffer A."/>
            <person name="Nasmyth K."/>
        </authorList>
    </citation>
    <scope>NUCLEOTIDE SEQUENCE [GENOMIC DNA]</scope>
    <scope>FUNCTION</scope>
    <scope>SUBCELLULAR LOCATION</scope>
    <source>
        <strain>ATCC 200060 / W303</strain>
    </source>
</reference>
<reference key="3">
    <citation type="journal article" date="1996" name="Yeast">
        <title>Fifteen open reading frames in a 30.8 kb region of the right arm of chromosome VI from Saccharomyces cerevisiae.</title>
        <authorList>
            <person name="Eki T."/>
            <person name="Naitou M."/>
            <person name="Hagiwara H."/>
            <person name="Abe M."/>
            <person name="Ozawa M."/>
            <person name="Sasanuma S."/>
            <person name="Sasanuma M."/>
            <person name="Tsuchiya Y."/>
            <person name="Shibata T."/>
            <person name="Watanabe K."/>
            <person name="Ono A."/>
            <person name="Yamazaki M."/>
            <person name="Tashiro H."/>
            <person name="Hanaoka F."/>
            <person name="Murakami Y."/>
        </authorList>
    </citation>
    <scope>NUCLEOTIDE SEQUENCE [GENOMIC DNA]</scope>
    <source>
        <strain>ATCC 204511 / S288c / AB972</strain>
    </source>
</reference>
<reference key="4">
    <citation type="journal article" date="1995" name="Nat. Genet.">
        <title>Analysis of the nucleotide sequence of chromosome VI from Saccharomyces cerevisiae.</title>
        <authorList>
            <person name="Murakami Y."/>
            <person name="Naitou M."/>
            <person name="Hagiwara H."/>
            <person name="Shibata T."/>
            <person name="Ozawa M."/>
            <person name="Sasanuma S."/>
            <person name="Sasanuma M."/>
            <person name="Tsuchiya Y."/>
            <person name="Soeda E."/>
            <person name="Yokoyama K."/>
            <person name="Yamazaki M."/>
            <person name="Tashiro H."/>
            <person name="Eki T."/>
        </authorList>
    </citation>
    <scope>NUCLEOTIDE SEQUENCE [LARGE SCALE GENOMIC DNA]</scope>
    <source>
        <strain>ATCC 204508 / S288c</strain>
    </source>
</reference>
<reference key="5">
    <citation type="journal article" date="2014" name="G3 (Bethesda)">
        <title>The reference genome sequence of Saccharomyces cerevisiae: Then and now.</title>
        <authorList>
            <person name="Engel S.R."/>
            <person name="Dietrich F.S."/>
            <person name="Fisk D.G."/>
            <person name="Binkley G."/>
            <person name="Balakrishnan R."/>
            <person name="Costanzo M.C."/>
            <person name="Dwight S.S."/>
            <person name="Hitz B.C."/>
            <person name="Karra K."/>
            <person name="Nash R.S."/>
            <person name="Weng S."/>
            <person name="Wong E.D."/>
            <person name="Lloyd P."/>
            <person name="Skrzypek M.S."/>
            <person name="Miyasato S.R."/>
            <person name="Simison M."/>
            <person name="Cherry J.M."/>
        </authorList>
    </citation>
    <scope>GENOME REANNOTATION</scope>
    <source>
        <strain>ATCC 204508 / S288c</strain>
    </source>
</reference>
<reference key="6">
    <citation type="journal article" date="2002" name="Curr. Biol.">
        <title>Eco1 is a novel acetyltransferase that can acetylate proteins involved in cohesion.</title>
        <authorList>
            <person name="Ivanov D."/>
            <person name="Schleiffer A."/>
            <person name="Eisenhaber F."/>
            <person name="Mechtler K."/>
            <person name="Haering C.H."/>
            <person name="Nasmyth K."/>
        </authorList>
    </citation>
    <scope>ACETYLATION AT LYS-223</scope>
    <scope>ENZYME ACTIVITY</scope>
    <scope>MUTAGENESIS OF GLY-211; 222-ARG-LYS-223; GLY-225 AND ASP-232</scope>
</reference>
<reference key="7">
    <citation type="journal article" date="2003" name="Mol. Cell. Biol.">
        <title>Mechanical link between cohesion establishment and DNA replication: Ctf7p/Eco1p, a cohesion establishment factor, associates with three different replication factor C complexes.</title>
        <authorList>
            <person name="Kenna M.A."/>
            <person name="Skibbens R.V."/>
        </authorList>
    </citation>
    <scope>FUNCTION</scope>
    <scope>INTERACTION WITH CHL12; RFC1; RFC2; RFC3; RFC4; RFC5 AND RAD24</scope>
</reference>
<reference key="8">
    <citation type="journal article" date="2004" name="Genetics">
        <title>Chl1p, a DNA helicase-like protein in budding yeast, functions in sister-chromatid cohesion.</title>
        <authorList>
            <person name="Skibbens R.V."/>
        </authorList>
    </citation>
    <scope>INTERACTION WITH CHL1</scope>
</reference>
<reference key="9">
    <citation type="journal article" date="2004" name="J. Biol. Chem.">
        <title>The spindle pole body assembly component Mps3p/Nep98p functions in sister chromatid cohesion.</title>
        <authorList>
            <person name="Antoniacci L.M."/>
            <person name="Kenna M.A."/>
            <person name="Uetz P."/>
            <person name="Fields S."/>
            <person name="Skibbens R.V."/>
        </authorList>
    </citation>
    <scope>INTERACTION WITH MPS3</scope>
</reference>
<reference key="10">
    <citation type="journal article" date="2005" name="Curr. Biol.">
        <title>Ctf7p/Eco1p exhibits acetyltransferase activity -- but does it matter?</title>
        <authorList>
            <person name="Brands A."/>
            <person name="Skibbens R.V."/>
        </authorList>
    </citation>
    <scope>FUNCTION</scope>
    <scope>MUTAGENESIS OF CYS-35 AND HIS-53</scope>
</reference>
<reference key="11">
    <citation type="journal article" date="2008" name="Mol. Cell">
        <title>Acetylation of Smc3 by Eco1 is required for S phase sister chromatid cohesion in both human and yeast.</title>
        <authorList>
            <person name="Zhang J."/>
            <person name="Shi X."/>
            <person name="Li Y."/>
            <person name="Kim B.J."/>
            <person name="Jia J."/>
            <person name="Huang Z."/>
            <person name="Yang T."/>
            <person name="Fu X."/>
            <person name="Jung S.Y."/>
            <person name="Wang Y."/>
            <person name="Zhang P."/>
            <person name="Kim S.T."/>
            <person name="Pan X."/>
            <person name="Qin J."/>
        </authorList>
    </citation>
    <scope>CATALYTIC ACTIVITY</scope>
    <scope>AUTOACETYLATION</scope>
    <scope>INTERACTION WITH SMC3</scope>
</reference>
<organism>
    <name type="scientific">Saccharomyces cerevisiae (strain ATCC 204508 / S288c)</name>
    <name type="common">Baker's yeast</name>
    <dbReference type="NCBI Taxonomy" id="559292"/>
    <lineage>
        <taxon>Eukaryota</taxon>
        <taxon>Fungi</taxon>
        <taxon>Dikarya</taxon>
        <taxon>Ascomycota</taxon>
        <taxon>Saccharomycotina</taxon>
        <taxon>Saccharomycetes</taxon>
        <taxon>Saccharomycetales</taxon>
        <taxon>Saccharomycetaceae</taxon>
        <taxon>Saccharomyces</taxon>
    </lineage>
</organism>
<feature type="chain" id="PRO_0000074550" description="N-acetyltransferase ECO1">
    <location>
        <begin position="1"/>
        <end position="281"/>
    </location>
</feature>
<feature type="zinc finger region" description="CCHH-type">
    <location>
        <begin position="33"/>
        <end position="57"/>
    </location>
</feature>
<feature type="region of interest" description="Disordered" evidence="1">
    <location>
        <begin position="86"/>
        <end position="105"/>
    </location>
</feature>
<feature type="compositionally biased region" description="Low complexity" evidence="1">
    <location>
        <begin position="95"/>
        <end position="105"/>
    </location>
</feature>
<feature type="modified residue" description="N6-acetyllysine; by autocatalysis" evidence="2">
    <location>
        <position position="223"/>
    </location>
</feature>
<feature type="mutagenesis site" description="In ctf7-109; loss of function." evidence="6">
    <original>C</original>
    <variation>Y</variation>
    <location>
        <position position="35"/>
    </location>
</feature>
<feature type="mutagenesis site" description="In ctf7-108; loss of function." evidence="6">
    <original>H</original>
    <variation>Y</variation>
    <location>
        <position position="53"/>
    </location>
</feature>
<feature type="mutagenesis site" description="Abolishes acetyltransferase activity; but not chromatid cohesion activity." evidence="2">
    <original>G</original>
    <variation>D</variation>
    <location>
        <position position="211"/>
    </location>
</feature>
<feature type="mutagenesis site" description="Abolishes acetyltransferase activity; but not chromatid cohesion activity." evidence="2">
    <original>RK</original>
    <variation>GG</variation>
    <location>
        <begin position="222"/>
        <end position="223"/>
    </location>
</feature>
<feature type="mutagenesis site" description="Abolishes acetyltransferase activity; but not chromatid cohesion activity." evidence="2">
    <original>G</original>
    <variation>D</variation>
    <location>
        <position position="225"/>
    </location>
</feature>
<feature type="mutagenesis site" description="Abolishes acetyltransferase activity; but not chromatid cohesion activity." evidence="2">
    <original>D</original>
    <variation>G</variation>
    <location>
        <position position="232"/>
    </location>
</feature>
<dbReference type="EC" id="2.3.1.-"/>
<dbReference type="EMBL" id="D50617">
    <property type="protein sequence ID" value="BAA09266.1"/>
    <property type="molecule type" value="Genomic_DNA"/>
</dbReference>
<dbReference type="EMBL" id="BK006940">
    <property type="protein sequence ID" value="DAA12467.1"/>
    <property type="molecule type" value="Genomic_DNA"/>
</dbReference>
<dbReference type="PIR" id="S56282">
    <property type="entry name" value="S56282"/>
</dbReference>
<dbReference type="RefSeq" id="NP_116683.1">
    <property type="nucleotide sequence ID" value="NM_001179992.1"/>
</dbReference>
<dbReference type="SMR" id="P43605"/>
<dbReference type="BioGRID" id="31181">
    <property type="interactions" value="158"/>
</dbReference>
<dbReference type="DIP" id="DIP-5602N"/>
<dbReference type="FunCoup" id="P43605">
    <property type="interactions" value="50"/>
</dbReference>
<dbReference type="IntAct" id="P43605">
    <property type="interactions" value="14"/>
</dbReference>
<dbReference type="STRING" id="4932.YFR027W"/>
<dbReference type="iPTMnet" id="P43605"/>
<dbReference type="PaxDb" id="4932-YFR027W"/>
<dbReference type="PeptideAtlas" id="P43605"/>
<dbReference type="EnsemblFungi" id="YFR027W_mRNA">
    <property type="protein sequence ID" value="YFR027W"/>
    <property type="gene ID" value="YFR027W"/>
</dbReference>
<dbReference type="GeneID" id="850584"/>
<dbReference type="KEGG" id="sce:YFR027W"/>
<dbReference type="AGR" id="SGD:S000001923"/>
<dbReference type="SGD" id="S000001923">
    <property type="gene designation" value="ECO1"/>
</dbReference>
<dbReference type="VEuPathDB" id="FungiDB:YFR027W"/>
<dbReference type="eggNOG" id="KOG3014">
    <property type="taxonomic scope" value="Eukaryota"/>
</dbReference>
<dbReference type="GeneTree" id="ENSGT00940000175408"/>
<dbReference type="HOGENOM" id="CLU_039183_2_1_1"/>
<dbReference type="InParanoid" id="P43605"/>
<dbReference type="OMA" id="PSITHQE"/>
<dbReference type="OrthoDB" id="428854at2759"/>
<dbReference type="BioCyc" id="YEAST:G3O-30476-MONOMER"/>
<dbReference type="Reactome" id="R-SCE-2468052">
    <property type="pathway name" value="Establishment of Sister Chromatid Cohesion"/>
</dbReference>
<dbReference type="BioGRID-ORCS" id="850584">
    <property type="hits" value="4 hits in 10 CRISPR screens"/>
</dbReference>
<dbReference type="PRO" id="PR:P43605"/>
<dbReference type="Proteomes" id="UP000002311">
    <property type="component" value="Chromosome VI"/>
</dbReference>
<dbReference type="RNAct" id="P43605">
    <property type="molecule type" value="protein"/>
</dbReference>
<dbReference type="GO" id="GO:0000785">
    <property type="term" value="C:chromatin"/>
    <property type="evidence" value="ECO:0000314"/>
    <property type="project" value="UniProtKB"/>
</dbReference>
<dbReference type="GO" id="GO:0005737">
    <property type="term" value="C:cytoplasm"/>
    <property type="evidence" value="ECO:0007005"/>
    <property type="project" value="SGD"/>
</dbReference>
<dbReference type="GO" id="GO:0043596">
    <property type="term" value="C:nuclear replication fork"/>
    <property type="evidence" value="ECO:0000314"/>
    <property type="project" value="SGD"/>
</dbReference>
<dbReference type="GO" id="GO:0005634">
    <property type="term" value="C:nucleus"/>
    <property type="evidence" value="ECO:0007005"/>
    <property type="project" value="SGD"/>
</dbReference>
<dbReference type="GO" id="GO:0016407">
    <property type="term" value="F:acetyltransferase activity"/>
    <property type="evidence" value="ECO:0000314"/>
    <property type="project" value="UniProtKB"/>
</dbReference>
<dbReference type="GO" id="GO:0003682">
    <property type="term" value="F:chromatin binding"/>
    <property type="evidence" value="ECO:0000314"/>
    <property type="project" value="UniProtKB"/>
</dbReference>
<dbReference type="GO" id="GO:0061733">
    <property type="term" value="F:protein-lysine-acetyltransferase activity"/>
    <property type="evidence" value="ECO:0000318"/>
    <property type="project" value="GO_Central"/>
</dbReference>
<dbReference type="GO" id="GO:0008270">
    <property type="term" value="F:zinc ion binding"/>
    <property type="evidence" value="ECO:0007669"/>
    <property type="project" value="UniProtKB-KW"/>
</dbReference>
<dbReference type="GO" id="GO:0140588">
    <property type="term" value="P:chromatin looping"/>
    <property type="evidence" value="ECO:0000315"/>
    <property type="project" value="SGD"/>
</dbReference>
<dbReference type="GO" id="GO:0051276">
    <property type="term" value="P:chromosome organization"/>
    <property type="evidence" value="ECO:0000315"/>
    <property type="project" value="SGD"/>
</dbReference>
<dbReference type="GO" id="GO:0006281">
    <property type="term" value="P:DNA repair"/>
    <property type="evidence" value="ECO:0000314"/>
    <property type="project" value="SGD"/>
</dbReference>
<dbReference type="GO" id="GO:0006260">
    <property type="term" value="P:DNA replication"/>
    <property type="evidence" value="ECO:0000315"/>
    <property type="project" value="SGD"/>
</dbReference>
<dbReference type="GO" id="GO:0006302">
    <property type="term" value="P:double-strand break repair"/>
    <property type="evidence" value="ECO:0000315"/>
    <property type="project" value="SGD"/>
</dbReference>
<dbReference type="GO" id="GO:0034089">
    <property type="term" value="P:establishment of meiotic sister chromatid cohesion"/>
    <property type="evidence" value="ECO:0000315"/>
    <property type="project" value="SGD"/>
</dbReference>
<dbReference type="GO" id="GO:0034087">
    <property type="term" value="P:establishment of mitotic sister chromatid cohesion"/>
    <property type="evidence" value="ECO:0000315"/>
    <property type="project" value="SGD"/>
</dbReference>
<dbReference type="GO" id="GO:0007076">
    <property type="term" value="P:mitotic chromosome condensation"/>
    <property type="evidence" value="ECO:0000315"/>
    <property type="project" value="SGD"/>
</dbReference>
<dbReference type="GO" id="GO:0007064">
    <property type="term" value="P:mitotic sister chromatid cohesion"/>
    <property type="evidence" value="ECO:0000318"/>
    <property type="project" value="GO_Central"/>
</dbReference>
<dbReference type="GO" id="GO:0007088">
    <property type="term" value="P:regulation of mitotic nuclear division"/>
    <property type="evidence" value="ECO:0000315"/>
    <property type="project" value="UniProtKB"/>
</dbReference>
<dbReference type="GO" id="GO:0032200">
    <property type="term" value="P:telomere organization"/>
    <property type="evidence" value="ECO:0000315"/>
    <property type="project" value="SGD"/>
</dbReference>
<dbReference type="GO" id="GO:0070058">
    <property type="term" value="P:tRNA gene clustering"/>
    <property type="evidence" value="ECO:0000315"/>
    <property type="project" value="SGD"/>
</dbReference>
<dbReference type="InterPro" id="IPR028005">
    <property type="entry name" value="AcTrfase_ESCO_Znf_dom"/>
</dbReference>
<dbReference type="InterPro" id="IPR016181">
    <property type="entry name" value="Acyl_CoA_acyltransferase"/>
</dbReference>
<dbReference type="InterPro" id="IPR028009">
    <property type="entry name" value="ESCO_Acetyltransf_dom"/>
</dbReference>
<dbReference type="PANTHER" id="PTHR45884">
    <property type="entry name" value="N-ACETYLTRANSFERASE ECO"/>
    <property type="match status" value="1"/>
</dbReference>
<dbReference type="PANTHER" id="PTHR45884:SF2">
    <property type="entry name" value="N-ACETYLTRANSFERASE ECO"/>
    <property type="match status" value="1"/>
</dbReference>
<dbReference type="Pfam" id="PF13880">
    <property type="entry name" value="Acetyltransf_13"/>
    <property type="match status" value="1"/>
</dbReference>
<dbReference type="Pfam" id="PF13878">
    <property type="entry name" value="zf-C2H2_3"/>
    <property type="match status" value="1"/>
</dbReference>
<dbReference type="SUPFAM" id="SSF55729">
    <property type="entry name" value="Acyl-CoA N-acyltransferases (Nat)"/>
    <property type="match status" value="1"/>
</dbReference>
<protein>
    <recommendedName>
        <fullName>N-acetyltransferase ECO1</fullName>
        <ecNumber>2.3.1.-</ecNumber>
    </recommendedName>
    <alternativeName>
        <fullName>Chromosome transmission fidelity protein 7</fullName>
    </alternativeName>
    <alternativeName>
        <fullName>Establishment of cohesion protein 1</fullName>
    </alternativeName>
</protein>
<keyword id="KW-0007">Acetylation</keyword>
<keyword id="KW-0012">Acyltransferase</keyword>
<keyword id="KW-0131">Cell cycle</keyword>
<keyword id="KW-0235">DNA replication</keyword>
<keyword id="KW-0479">Metal-binding</keyword>
<keyword id="KW-0539">Nucleus</keyword>
<keyword id="KW-1185">Reference proteome</keyword>
<keyword id="KW-0808">Transferase</keyword>
<keyword id="KW-0862">Zinc</keyword>
<keyword id="KW-0863">Zinc-finger</keyword>
<evidence type="ECO:0000256" key="1">
    <source>
        <dbReference type="SAM" id="MobiDB-lite"/>
    </source>
</evidence>
<evidence type="ECO:0000269" key="2">
    <source>
    </source>
</evidence>
<evidence type="ECO:0000269" key="3">
    <source>
    </source>
</evidence>
<evidence type="ECO:0000269" key="4">
    <source>
    </source>
</evidence>
<evidence type="ECO:0000269" key="5">
    <source>
    </source>
</evidence>
<evidence type="ECO:0000269" key="6">
    <source>
    </source>
</evidence>
<evidence type="ECO:0000269" key="7">
    <source>
    </source>
</evidence>
<evidence type="ECO:0000269" key="8">
    <source>
    </source>
</evidence>
<evidence type="ECO:0000269" key="9">
    <source>
    </source>
</evidence>
<evidence type="ECO:0000305" key="10"/>